<keyword id="KW-0106">Calcium</keyword>
<keyword id="KW-0131">Cell cycle</keyword>
<keyword id="KW-0132">Cell division</keyword>
<keyword id="KW-0159">Chromosome partition</keyword>
<keyword id="KW-0963">Cytoplasm</keyword>
<keyword id="KW-0226">DNA condensation</keyword>
<feature type="chain" id="PRO_1000073661" description="Chromosome partition protein MukF">
    <location>
        <begin position="1"/>
        <end position="445"/>
    </location>
</feature>
<feature type="region of interest" description="Leucine-zipper">
    <location>
        <begin position="213"/>
        <end position="241"/>
    </location>
</feature>
<name>MUKF_VIBC3</name>
<dbReference type="EMBL" id="CP000627">
    <property type="protein sequence ID" value="ABQ21751.1"/>
    <property type="molecule type" value="Genomic_DNA"/>
</dbReference>
<dbReference type="EMBL" id="CP001235">
    <property type="protein sequence ID" value="ACP09830.1"/>
    <property type="molecule type" value="Genomic_DNA"/>
</dbReference>
<dbReference type="RefSeq" id="WP_001288884.1">
    <property type="nucleotide sequence ID" value="NZ_JAACZH010000016.1"/>
</dbReference>
<dbReference type="SMR" id="A5F7I0"/>
<dbReference type="KEGG" id="vco:VC0395_A1319"/>
<dbReference type="KEGG" id="vcr:VC395_1833"/>
<dbReference type="PATRIC" id="fig|345073.21.peg.1776"/>
<dbReference type="eggNOG" id="COG3006">
    <property type="taxonomic scope" value="Bacteria"/>
</dbReference>
<dbReference type="HOGENOM" id="CLU_049853_0_0_6"/>
<dbReference type="OrthoDB" id="6450805at2"/>
<dbReference type="Proteomes" id="UP000000249">
    <property type="component" value="Chromosome 2"/>
</dbReference>
<dbReference type="GO" id="GO:0005737">
    <property type="term" value="C:cytoplasm"/>
    <property type="evidence" value="ECO:0007669"/>
    <property type="project" value="UniProtKB-UniRule"/>
</dbReference>
<dbReference type="GO" id="GO:0009295">
    <property type="term" value="C:nucleoid"/>
    <property type="evidence" value="ECO:0007669"/>
    <property type="project" value="UniProtKB-SubCell"/>
</dbReference>
<dbReference type="GO" id="GO:0005509">
    <property type="term" value="F:calcium ion binding"/>
    <property type="evidence" value="ECO:0007669"/>
    <property type="project" value="UniProtKB-UniRule"/>
</dbReference>
<dbReference type="GO" id="GO:0051301">
    <property type="term" value="P:cell division"/>
    <property type="evidence" value="ECO:0007669"/>
    <property type="project" value="UniProtKB-KW"/>
</dbReference>
<dbReference type="GO" id="GO:0030261">
    <property type="term" value="P:chromosome condensation"/>
    <property type="evidence" value="ECO:0007669"/>
    <property type="project" value="UniProtKB-KW"/>
</dbReference>
<dbReference type="GO" id="GO:0007059">
    <property type="term" value="P:chromosome segregation"/>
    <property type="evidence" value="ECO:0007669"/>
    <property type="project" value="UniProtKB-UniRule"/>
</dbReference>
<dbReference type="GO" id="GO:0006260">
    <property type="term" value="P:DNA replication"/>
    <property type="evidence" value="ECO:0007669"/>
    <property type="project" value="UniProtKB-UniRule"/>
</dbReference>
<dbReference type="CDD" id="cd16337">
    <property type="entry name" value="MukF_C"/>
    <property type="match status" value="1"/>
</dbReference>
<dbReference type="CDD" id="cd16335">
    <property type="entry name" value="MukF_N"/>
    <property type="match status" value="1"/>
</dbReference>
<dbReference type="Gene3D" id="1.20.58.590">
    <property type="entry name" value="Chromosome partition protein MukF, middle domain"/>
    <property type="match status" value="1"/>
</dbReference>
<dbReference type="Gene3D" id="1.10.225.40">
    <property type="entry name" value="MukF, C-terminal domain"/>
    <property type="match status" value="1"/>
</dbReference>
<dbReference type="Gene3D" id="1.10.10.10">
    <property type="entry name" value="Winged helix-like DNA-binding domain superfamily/Winged helix DNA-binding domain"/>
    <property type="match status" value="1"/>
</dbReference>
<dbReference type="HAMAP" id="MF_01803">
    <property type="entry name" value="MukF"/>
    <property type="match status" value="1"/>
</dbReference>
<dbReference type="InterPro" id="IPR005582">
    <property type="entry name" value="Chromosome_partition_MukF"/>
</dbReference>
<dbReference type="InterPro" id="IPR033441">
    <property type="entry name" value="MukF_C"/>
</dbReference>
<dbReference type="InterPro" id="IPR038198">
    <property type="entry name" value="MukF_C_sf"/>
</dbReference>
<dbReference type="InterPro" id="IPR033440">
    <property type="entry name" value="MukF_M"/>
</dbReference>
<dbReference type="InterPro" id="IPR036141">
    <property type="entry name" value="MukF_M_sp"/>
</dbReference>
<dbReference type="InterPro" id="IPR033439">
    <property type="entry name" value="MukF_WHTH"/>
</dbReference>
<dbReference type="InterPro" id="IPR036388">
    <property type="entry name" value="WH-like_DNA-bd_sf"/>
</dbReference>
<dbReference type="InterPro" id="IPR036390">
    <property type="entry name" value="WH_DNA-bd_sf"/>
</dbReference>
<dbReference type="NCBIfam" id="NF003615">
    <property type="entry name" value="PRK05260.1"/>
    <property type="match status" value="1"/>
</dbReference>
<dbReference type="Pfam" id="PF03882">
    <property type="entry name" value="KicB"/>
    <property type="match status" value="1"/>
</dbReference>
<dbReference type="Pfam" id="PF17193">
    <property type="entry name" value="MukF_C"/>
    <property type="match status" value="1"/>
</dbReference>
<dbReference type="Pfam" id="PF17192">
    <property type="entry name" value="MukF_M"/>
    <property type="match status" value="1"/>
</dbReference>
<dbReference type="PIRSF" id="PIRSF018282">
    <property type="entry name" value="MukF"/>
    <property type="match status" value="1"/>
</dbReference>
<dbReference type="SUPFAM" id="SSF140570">
    <property type="entry name" value="MukF C-terminal domain-like"/>
    <property type="match status" value="1"/>
</dbReference>
<dbReference type="SUPFAM" id="SSF46785">
    <property type="entry name" value="Winged helix' DNA-binding domain"/>
    <property type="match status" value="1"/>
</dbReference>
<comment type="function">
    <text evidence="1">Involved in chromosome condensation, segregation and cell cycle progression. May participate in facilitating chromosome segregation by condensation DNA from both sides of a centrally located replisome during cell division. Not required for mini-F plasmid partitioning. Probably acts via its interaction with MukB and MukE. Overexpression results in anucleate cells. It has a calcium binding activity.</text>
</comment>
<comment type="subunit">
    <text evidence="1">Interacts, and probably forms a ternary complex, with MukE and MukB via its C-terminal region. The complex formation is stimulated by calcium or magnesium. It is required for an interaction between MukE and MukB.</text>
</comment>
<comment type="subcellular location">
    <subcellularLocation>
        <location evidence="1">Cytoplasm</location>
        <location evidence="1">Nucleoid</location>
    </subcellularLocation>
    <text evidence="1">Restricted to the nucleoid region.</text>
</comment>
<comment type="similarity">
    <text evidence="1">Belongs to the MukF family.</text>
</comment>
<protein>
    <recommendedName>
        <fullName evidence="1">Chromosome partition protein MukF</fullName>
    </recommendedName>
</protein>
<accession>A5F7I0</accession>
<accession>C3M1B4</accession>
<gene>
    <name evidence="1" type="primary">mukF</name>
    <name type="ordered locus">VC0395_A1319</name>
    <name type="ordered locus">VC395_1833</name>
</gene>
<organism>
    <name type="scientific">Vibrio cholerae serotype O1 (strain ATCC 39541 / Classical Ogawa 395 / O395)</name>
    <dbReference type="NCBI Taxonomy" id="345073"/>
    <lineage>
        <taxon>Bacteria</taxon>
        <taxon>Pseudomonadati</taxon>
        <taxon>Pseudomonadota</taxon>
        <taxon>Gammaproteobacteria</taxon>
        <taxon>Vibrionales</taxon>
        <taxon>Vibrionaceae</taxon>
        <taxon>Vibrio</taxon>
    </lineage>
</organism>
<proteinExistence type="inferred from homology"/>
<reference key="1">
    <citation type="submission" date="2007-03" db="EMBL/GenBank/DDBJ databases">
        <authorList>
            <person name="Heidelberg J."/>
        </authorList>
    </citation>
    <scope>NUCLEOTIDE SEQUENCE [LARGE SCALE GENOMIC DNA]</scope>
    <source>
        <strain>ATCC 39541 / Classical Ogawa 395 / O395</strain>
    </source>
</reference>
<reference key="2">
    <citation type="journal article" date="2008" name="PLoS ONE">
        <title>A recalibrated molecular clock and independent origins for the cholera pandemic clones.</title>
        <authorList>
            <person name="Feng L."/>
            <person name="Reeves P.R."/>
            <person name="Lan R."/>
            <person name="Ren Y."/>
            <person name="Gao C."/>
            <person name="Zhou Z."/>
            <person name="Ren Y."/>
            <person name="Cheng J."/>
            <person name="Wang W."/>
            <person name="Wang J."/>
            <person name="Qian W."/>
            <person name="Li D."/>
            <person name="Wang L."/>
        </authorList>
    </citation>
    <scope>NUCLEOTIDE SEQUENCE [LARGE SCALE GENOMIC DNA]</scope>
    <source>
        <strain>ATCC 39541 / Classical Ogawa 395 / O395</strain>
    </source>
</reference>
<evidence type="ECO:0000255" key="1">
    <source>
        <dbReference type="HAMAP-Rule" id="MF_01803"/>
    </source>
</evidence>
<sequence>MSEFTQDTVQKPIDELVTWVKQYDFSLNLPTERLAFLLAIAVLSNERFDEELGEGELHDAFAIVTRLFAESGEASAFRANNAINDLVKQRLLSRFTSEMTEGASIYRLTPLAIGITDYYVRHREFSKLKLSIQLSMVADEMAKAVESAQQGGSVAHWRKNVFGVLKYSVSEIFDRIDLNQRVMDEQQQSVKEQIADLLNKDWRDAINNCEALLSETSATLRELQDTLQAAGDELQTQILDIQECVYGDLELDFIEETLFALQMKLDRITSWGQQSIDLWIGYDRHVHKFIRTAIDMDQNRAFSQRLRQSMNDYFEQPWYLTYADAERLSDLRDETLTLRDEEVTGHVPTEVEYEELQQVNDELAQRIGDMLKVHKEQGAAIDLALVLRDYLASHPRTHHFDLARMVVDQAVRLGYSESDYRAIQPDWTAINDFGAKVQANVIDRY</sequence>